<organism>
    <name type="scientific">Frog virus 3 (isolate Goorha)</name>
    <name type="common">FV-3</name>
    <dbReference type="NCBI Taxonomy" id="654924"/>
    <lineage>
        <taxon>Viruses</taxon>
        <taxon>Varidnaviria</taxon>
        <taxon>Bamfordvirae</taxon>
        <taxon>Nucleocytoviricota</taxon>
        <taxon>Megaviricetes</taxon>
        <taxon>Pimascovirales</taxon>
        <taxon>Iridoviridae</taxon>
        <taxon>Alphairidovirinae</taxon>
        <taxon>Ranavirus</taxon>
        <taxon>Frog virus 3</taxon>
    </lineage>
</organism>
<dbReference type="EMBL" id="AY548484">
    <property type="protein sequence ID" value="AAT09744.1"/>
    <property type="molecule type" value="Genomic_DNA"/>
</dbReference>
<dbReference type="RefSeq" id="YP_031663.1">
    <property type="nucleotide sequence ID" value="NC_005946.1"/>
</dbReference>
<dbReference type="SMR" id="Q6GZP1"/>
<dbReference type="KEGG" id="vg:2947803"/>
<dbReference type="Proteomes" id="UP000008770">
    <property type="component" value="Segment"/>
</dbReference>
<dbReference type="Gene3D" id="3.70.10.10">
    <property type="match status" value="1"/>
</dbReference>
<accession>Q6GZP1</accession>
<feature type="chain" id="PRO_0000410540" description="Uncharacterized protein 084R">
    <location>
        <begin position="1"/>
        <end position="245"/>
    </location>
</feature>
<proteinExistence type="predicted"/>
<protein>
    <recommendedName>
        <fullName>Uncharacterized protein 084R</fullName>
    </recommendedName>
</protein>
<name>084R_FRG3G</name>
<reference key="1">
    <citation type="journal article" date="2004" name="Virology">
        <title>Comparative genomic analyses of frog virus 3, type species of the genus Ranavirus (family Iridoviridae).</title>
        <authorList>
            <person name="Tan W.G."/>
            <person name="Barkman T.J."/>
            <person name="Gregory Chinchar V."/>
            <person name="Essani K."/>
        </authorList>
    </citation>
    <scope>NUCLEOTIDE SEQUENCE [LARGE SCALE GENOMIC DNA]</scope>
</reference>
<gene>
    <name type="ORF">FV3-084R</name>
</gene>
<organismHost>
    <name type="scientific">Dryophytes versicolor</name>
    <name type="common">chameleon treefrog</name>
    <dbReference type="NCBI Taxonomy" id="30343"/>
</organismHost>
<organismHost>
    <name type="scientific">Lithobates pipiens</name>
    <name type="common">Northern leopard frog</name>
    <name type="synonym">Rana pipiens</name>
    <dbReference type="NCBI Taxonomy" id="8404"/>
</organismHost>
<organismHost>
    <name type="scientific">Lithobates sylvaticus</name>
    <name type="common">Wood frog</name>
    <name type="synonym">Rana sylvatica</name>
    <dbReference type="NCBI Taxonomy" id="45438"/>
</organismHost>
<organismHost>
    <name type="scientific">Notophthalmus viridescens</name>
    <name type="common">Eastern newt</name>
    <name type="synonym">Triturus viridescens</name>
    <dbReference type="NCBI Taxonomy" id="8316"/>
</organismHost>
<keyword id="KW-1185">Reference proteome</keyword>
<sequence>MLWEAVTDKPVKLKGLLELLLNNMDSARLVVTSQSVSVVDYQSNMAVTASMPSSVFTSYVYKSDAECLYAGLPHAALPDLKSFKAKCNVTLRLMGDPECGQYTMKIIIANASHMSTSINMVVDHGKKEADRGHPEGAGKPFTLTQQEFNTLCKTFKQGPVNLGVFGGVLVASGGVDGIKVKEVAFGAPDCVTPHVKLCVHAEKMSRLVKMGPFSAGSLTVCVAQGSVTVSTCGHLGSLTVTLFEG</sequence>